<accession>Q7T310</accession>
<gene>
    <name evidence="2" type="primary">pigm</name>
    <name type="ORF">zgc:64177</name>
</gene>
<evidence type="ECO:0000250" key="1">
    <source>
        <dbReference type="UniProtKB" id="Q9EQY6"/>
    </source>
</evidence>
<evidence type="ECO:0000250" key="2">
    <source>
        <dbReference type="UniProtKB" id="Q9H3S5"/>
    </source>
</evidence>
<evidence type="ECO:0000255" key="3"/>
<evidence type="ECO:0000305" key="4"/>
<protein>
    <recommendedName>
        <fullName evidence="2">GPI alpha-1,4-mannosyltransferase I, catalytic subunit</fullName>
        <ecNumber evidence="2">2.4.1.-</ecNumber>
    </recommendedName>
    <alternativeName>
        <fullName>GPI mannosyltransferase I</fullName>
        <shortName>GPI-MT-I</shortName>
    </alternativeName>
    <alternativeName>
        <fullName>Phosphatidylinositol-glycan biosynthesis class M protein</fullName>
        <shortName>PIG-M</shortName>
    </alternativeName>
</protein>
<reference key="1">
    <citation type="submission" date="2003-06" db="EMBL/GenBank/DDBJ databases">
        <authorList>
            <consortium name="NIH - Zebrafish Gene Collection (ZGC) project"/>
        </authorList>
    </citation>
    <scope>NUCLEOTIDE SEQUENCE [LARGE SCALE MRNA]</scope>
    <source>
        <tissue>Embryo</tissue>
    </source>
</reference>
<feature type="chain" id="PRO_0000246219" description="GPI alpha-1,4-mannosyltransferase I, catalytic subunit">
    <location>
        <begin position="1"/>
        <end position="392"/>
    </location>
</feature>
<feature type="topological domain" description="Cytoplasmic" evidence="3">
    <location>
        <begin position="1"/>
        <end position="4"/>
    </location>
</feature>
<feature type="transmembrane region" description="Helical" evidence="3">
    <location>
        <begin position="5"/>
        <end position="25"/>
    </location>
</feature>
<feature type="topological domain" description="Lumenal" evidence="3">
    <location>
        <begin position="26"/>
        <end position="65"/>
    </location>
</feature>
<feature type="transmembrane region" description="Helical" evidence="3">
    <location>
        <begin position="66"/>
        <end position="86"/>
    </location>
</feature>
<feature type="topological domain" description="Cytoplasmic" evidence="3">
    <location>
        <begin position="87"/>
        <end position="125"/>
    </location>
</feature>
<feature type="transmembrane region" description="Helical" evidence="3">
    <location>
        <begin position="126"/>
        <end position="148"/>
    </location>
</feature>
<feature type="topological domain" description="Lumenal" evidence="3">
    <location>
        <begin position="149"/>
        <end position="156"/>
    </location>
</feature>
<feature type="transmembrane region" description="Helical" evidence="3">
    <location>
        <begin position="157"/>
        <end position="177"/>
    </location>
</feature>
<feature type="topological domain" description="Cytoplasmic" evidence="3">
    <location>
        <begin position="178"/>
        <end position="198"/>
    </location>
</feature>
<feature type="transmembrane region" description="Helical" evidence="3">
    <location>
        <begin position="199"/>
        <end position="219"/>
    </location>
</feature>
<feature type="topological domain" description="Lumenal" evidence="3">
    <location>
        <begin position="220"/>
        <end position="261"/>
    </location>
</feature>
<feature type="transmembrane region" description="Helical" evidence="3">
    <location>
        <begin position="262"/>
        <end position="282"/>
    </location>
</feature>
<feature type="topological domain" description="Cytoplasmic" evidence="3">
    <location>
        <begin position="283"/>
        <end position="302"/>
    </location>
</feature>
<feature type="transmembrane region" description="Helical" evidence="3">
    <location>
        <begin position="303"/>
        <end position="323"/>
    </location>
</feature>
<feature type="topological domain" description="Lumenal" evidence="3">
    <location>
        <begin position="324"/>
        <end position="330"/>
    </location>
</feature>
<feature type="transmembrane region" description="Helical" evidence="3">
    <location>
        <begin position="331"/>
        <end position="351"/>
    </location>
</feature>
<feature type="topological domain" description="Cytoplasmic" evidence="3">
    <location>
        <begin position="352"/>
        <end position="360"/>
    </location>
</feature>
<feature type="transmembrane region" description="Helical" evidence="3">
    <location>
        <begin position="361"/>
        <end position="381"/>
    </location>
</feature>
<feature type="topological domain" description="Lumenal" evidence="3">
    <location>
        <begin position="382"/>
        <end position="392"/>
    </location>
</feature>
<keyword id="KW-0256">Endoplasmic reticulum</keyword>
<keyword id="KW-0328">Glycosyltransferase</keyword>
<keyword id="KW-0337">GPI-anchor biosynthesis</keyword>
<keyword id="KW-0472">Membrane</keyword>
<keyword id="KW-1185">Reference proteome</keyword>
<keyword id="KW-0808">Transferase</keyword>
<keyword id="KW-0812">Transmembrane</keyword>
<keyword id="KW-1133">Transmembrane helix</keyword>
<dbReference type="EC" id="2.4.1.-" evidence="2"/>
<dbReference type="EMBL" id="BC053299">
    <property type="protein sequence ID" value="AAH53299.1"/>
    <property type="molecule type" value="mRNA"/>
</dbReference>
<dbReference type="RefSeq" id="NP_956684.1">
    <property type="nucleotide sequence ID" value="NM_200390.1"/>
</dbReference>
<dbReference type="SMR" id="Q7T310"/>
<dbReference type="FunCoup" id="Q7T310">
    <property type="interactions" value="1745"/>
</dbReference>
<dbReference type="STRING" id="7955.ENSDARP00000036819"/>
<dbReference type="CAZy" id="GT50">
    <property type="family name" value="Glycosyltransferase Family 50"/>
</dbReference>
<dbReference type="PaxDb" id="7955-ENSDARP00000036819"/>
<dbReference type="Ensembl" id="ENSDART00000032722">
    <property type="protein sequence ID" value="ENSDARP00000036819"/>
    <property type="gene ID" value="ENSDARG00000024277"/>
</dbReference>
<dbReference type="GeneID" id="393361"/>
<dbReference type="KEGG" id="dre:393361"/>
<dbReference type="AGR" id="ZFIN:ZDB-GENE-040426-1393"/>
<dbReference type="CTD" id="93183"/>
<dbReference type="ZFIN" id="ZDB-GENE-040426-1393">
    <property type="gene designation" value="pigm"/>
</dbReference>
<dbReference type="eggNOG" id="KOG3893">
    <property type="taxonomic scope" value="Eukaryota"/>
</dbReference>
<dbReference type="HOGENOM" id="CLU_024220_3_1_1"/>
<dbReference type="InParanoid" id="Q7T310"/>
<dbReference type="OMA" id="MLWFIGQ"/>
<dbReference type="OrthoDB" id="1741594at2759"/>
<dbReference type="PhylomeDB" id="Q7T310"/>
<dbReference type="TreeFam" id="TF314752"/>
<dbReference type="UniPathway" id="UPA00196"/>
<dbReference type="PRO" id="PR:Q7T310"/>
<dbReference type="Proteomes" id="UP000000437">
    <property type="component" value="Chromosome 24"/>
</dbReference>
<dbReference type="Bgee" id="ENSDARG00000024277">
    <property type="expression patterns" value="Expressed in early embryo and 21 other cell types or tissues"/>
</dbReference>
<dbReference type="GO" id="GO:0005789">
    <property type="term" value="C:endoplasmic reticulum membrane"/>
    <property type="evidence" value="ECO:0000250"/>
    <property type="project" value="UniProtKB"/>
</dbReference>
<dbReference type="GO" id="GO:1990529">
    <property type="term" value="C:glycosylphosphatidylinositol-mannosyltransferase I complex"/>
    <property type="evidence" value="ECO:0000250"/>
    <property type="project" value="UniProtKB"/>
</dbReference>
<dbReference type="GO" id="GO:0180041">
    <property type="term" value="F:glycolipid 1,4-alpha-mannosyltransferase activity"/>
    <property type="evidence" value="ECO:0000250"/>
    <property type="project" value="UniProtKB"/>
</dbReference>
<dbReference type="GO" id="GO:0000030">
    <property type="term" value="F:mannosyltransferase activity"/>
    <property type="evidence" value="ECO:0000318"/>
    <property type="project" value="GO_Central"/>
</dbReference>
<dbReference type="GO" id="GO:0006506">
    <property type="term" value="P:GPI anchor biosynthetic process"/>
    <property type="evidence" value="ECO:0000250"/>
    <property type="project" value="UniProtKB"/>
</dbReference>
<dbReference type="InterPro" id="IPR007704">
    <property type="entry name" value="PIG-M"/>
</dbReference>
<dbReference type="PANTHER" id="PTHR12886:SF0">
    <property type="entry name" value="GPI MANNOSYLTRANSFERASE 1"/>
    <property type="match status" value="1"/>
</dbReference>
<dbReference type="PANTHER" id="PTHR12886">
    <property type="entry name" value="PIG-M MANNOSYLTRANSFERASE"/>
    <property type="match status" value="1"/>
</dbReference>
<dbReference type="Pfam" id="PF05007">
    <property type="entry name" value="Mannosyl_trans"/>
    <property type="match status" value="1"/>
</dbReference>
<organism>
    <name type="scientific">Danio rerio</name>
    <name type="common">Zebrafish</name>
    <name type="synonym">Brachydanio rerio</name>
    <dbReference type="NCBI Taxonomy" id="7955"/>
    <lineage>
        <taxon>Eukaryota</taxon>
        <taxon>Metazoa</taxon>
        <taxon>Chordata</taxon>
        <taxon>Craniata</taxon>
        <taxon>Vertebrata</taxon>
        <taxon>Euteleostomi</taxon>
        <taxon>Actinopterygii</taxon>
        <taxon>Neopterygii</taxon>
        <taxon>Teleostei</taxon>
        <taxon>Ostariophysi</taxon>
        <taxon>Cypriniformes</taxon>
        <taxon>Danionidae</taxon>
        <taxon>Danioninae</taxon>
        <taxon>Danio</taxon>
    </lineage>
</organism>
<name>PIGM_DANRE</name>
<proteinExistence type="evidence at transcript level"/>
<sequence length="392" mass="44409">MEARVCVLFGAAALLRLLLLCVGVYQDQTLKLKYTDVDYHVFTDAARFITQGESPYRRSTFRYTPLLALLLVPNVYLSLLFGKLLFGFCDLLSGLLMFRLLVLRGASHGSACVSCGLWLLNPLPMAVSTRGNAESVLAVLVLSTLLCLQLRKHTTAALLFGLSVHMKIYPVTYALPIALALTAAPARGRGVLLRFFSPALLRFAAVSAAVFLSLGLIFYCRYGWEFLQEAYLYHLTRRDLRHNFSPFFYLQYVCAERCWSSGLLPLLLLPQLLLLLLASAAFSSDLPFCCFLHTAVFVSFNRVCTSQYFLWYLCLLPVVLPRLRLRLGRGLLLLLLWLLLQGLWLAPAYLLEFQGWNSFSWIWAASLLFLLTNTFILAQIIQHYRPHDRKAD</sequence>
<comment type="function">
    <text evidence="2">Catalytic subunit of the glycosylphosphatidylinositol-mannosyltransferase I complex which catalyzes the transfer of the first mannose, via an alpha-1,4 bond from a dolichol-phosphate-mannose (Dol-P-Man) to the glucosaminyl acyl phosphatidylinositol (GlcN-(acyl)PI) intermediate to generate alpha-D-Man-(1-&gt;4)-alpha-D-GlcN-(1-&gt;6)-(1-radyl,2-acyl-sn-glycero-3-phospho)-2-acyl-inositol and participates in the sixth step of the glycosylphosphatidylinositol-anchor biosynthesis.</text>
</comment>
<comment type="pathway">
    <text evidence="2">Glycolipid biosynthesis; glycosylphosphatidylinositol-anchor biosynthesis.</text>
</comment>
<comment type="subunit">
    <text evidence="1">Part of the glycosylphosphatidylinositol-mannosyltransferase I complex that is composed of PIGM and PIGX.</text>
</comment>
<comment type="subcellular location">
    <subcellularLocation>
        <location evidence="2">Endoplasmic reticulum membrane</location>
        <topology evidence="2">Multi-pass membrane protein</topology>
    </subcellularLocation>
</comment>
<comment type="similarity">
    <text evidence="4">Belongs to the PIGM family.</text>
</comment>